<feature type="signal peptide" evidence="3">
    <location>
        <begin position="1"/>
        <end position="25"/>
    </location>
</feature>
<feature type="chain" id="PRO_5000057062" description="Mannan endo-1,4-beta-mannosidase 2">
    <location>
        <begin position="26"/>
        <end position="414"/>
    </location>
</feature>
<feature type="active site" description="Proton donor" evidence="2">
    <location>
        <position position="211"/>
    </location>
</feature>
<feature type="active site" description="Nucleophile" evidence="2">
    <location>
        <position position="328"/>
    </location>
</feature>
<feature type="binding site" evidence="1">
    <location>
        <position position="95"/>
    </location>
    <ligand>
        <name>substrate</name>
    </ligand>
</feature>
<feature type="binding site" evidence="1">
    <location>
        <position position="210"/>
    </location>
    <ligand>
        <name>substrate</name>
    </ligand>
</feature>
<feature type="binding site" evidence="1">
    <location>
        <position position="288"/>
    </location>
    <ligand>
        <name>substrate</name>
    </ligand>
</feature>
<feature type="binding site" evidence="1">
    <location>
        <position position="370"/>
    </location>
    <ligand>
        <name>substrate</name>
    </ligand>
</feature>
<organism>
    <name type="scientific">Solanum lycopersicum</name>
    <name type="common">Tomato</name>
    <name type="synonym">Lycopersicon esculentum</name>
    <dbReference type="NCBI Taxonomy" id="4081"/>
    <lineage>
        <taxon>Eukaryota</taxon>
        <taxon>Viridiplantae</taxon>
        <taxon>Streptophyta</taxon>
        <taxon>Embryophyta</taxon>
        <taxon>Tracheophyta</taxon>
        <taxon>Spermatophyta</taxon>
        <taxon>Magnoliopsida</taxon>
        <taxon>eudicotyledons</taxon>
        <taxon>Gunneridae</taxon>
        <taxon>Pentapetalae</taxon>
        <taxon>asterids</taxon>
        <taxon>lamiids</taxon>
        <taxon>Solanales</taxon>
        <taxon>Solanaceae</taxon>
        <taxon>Solanoideae</taxon>
        <taxon>Solaneae</taxon>
        <taxon>Solanum</taxon>
        <taxon>Solanum subgen. Lycopersicon</taxon>
    </lineage>
</organism>
<reference key="1">
    <citation type="journal article" date="2000" name="Plant Physiol.">
        <title>A germination-specific endo-beta-mannanase gene is expressed exclusively in the micropylar endosperm cap of tomato seeds.</title>
        <authorList>
            <person name="Nonogaki H."/>
            <person name="Gee O.H."/>
            <person name="Bradford K.J."/>
        </authorList>
    </citation>
    <scope>NUCLEOTIDE SEQUENCE [MRNA]</scope>
    <scope>FUNCTION</scope>
    <scope>DEVELOPMENTAL STAGE</scope>
    <scope>INDUCTION</scope>
    <source>
        <strain>cv. Moneymaker</strain>
        <tissue>Seed</tissue>
    </source>
</reference>
<reference key="2">
    <citation type="submission" date="2007-05" db="EMBL/GenBank/DDBJ databases">
        <authorList>
            <person name="Nonogaki H."/>
            <person name="Gee O.H."/>
            <person name="Bradford K.J."/>
        </authorList>
    </citation>
    <scope>SEQUENCE REVISION TO 170-174</scope>
</reference>
<protein>
    <recommendedName>
        <fullName>Mannan endo-1,4-beta-mannosidase 2</fullName>
        <ecNumber>3.2.1.78</ecNumber>
    </recommendedName>
    <alternativeName>
        <fullName>Beta-mannanase 2</fullName>
    </alternativeName>
    <alternativeName>
        <fullName>Endo-beta-1,4-mannanase 2</fullName>
    </alternativeName>
    <alternativeName>
        <fullName>LeMAN2</fullName>
    </alternativeName>
</protein>
<accession>Q9FZ03</accession>
<comment type="function">
    <text evidence="4">Possesses endo-beta-mannanase activity in vitro. May be involved in seed germination by weakening the endosperm cap prior to radicle emergence.</text>
</comment>
<comment type="catalytic activity">
    <reaction>
        <text>Random hydrolysis of (1-&gt;4)-beta-D-mannosidic linkages in mannans, galactomannans and glucomannans.</text>
        <dbReference type="EC" id="3.2.1.78"/>
    </reaction>
</comment>
<comment type="subcellular location">
    <subcellularLocation>
        <location evidence="5">Secreted</location>
    </subcellularLocation>
</comment>
<comment type="developmental stage">
    <text evidence="4">Expressed specifically in the endosperm cap before radicle emergence.</text>
</comment>
<comment type="induction">
    <text evidence="4">By gibberellin.</text>
</comment>
<comment type="similarity">
    <text evidence="5">Belongs to the glycosyl hydrolase 5 (cellulase A) family.</text>
</comment>
<name>MAN2_SOLLC</name>
<sequence>MAYFQRLISCIFVLFLLSLAFACEARVLLDENNANDQGFVRVNGAHFELNGSPFLFNGFNSYWLMHVAAEPSERYKVSEVLREASSAGLSVCRTWAFSDGGDRALQISPGVYDERVFQGLDFVISEAKKYGIRLILSFVNNYNDFGGKAQYVQWARNAGAQINGDDDFYTNYITKNYYKNHIKKVVTRFNTITGMTYKDDSTIMAWELMNEPRNQADYSGNTLNAWVQEMASFVKSLDNKHLLEIGMEGFYGDSVPERKSINPGYQVGTDFISNHLIKEIDFATIHAYTDQWLSGQSDDAQMIFMQKWMTSHWQDAKNILKKPLVLAEFGKSSRDPGYNQNIRDTFMSTIYRNIYSLAKDGGTMGGSLIWQLVAQGMENYEDGYCIELGKNPSTAGIITSQSHAMTALAHLVKI</sequence>
<proteinExistence type="evidence at transcript level"/>
<gene>
    <name type="primary">MAN2</name>
</gene>
<evidence type="ECO:0000250" key="1">
    <source>
        <dbReference type="UniProtKB" id="B4XC07"/>
    </source>
</evidence>
<evidence type="ECO:0000250" key="2">
    <source>
        <dbReference type="UniProtKB" id="Q99036"/>
    </source>
</evidence>
<evidence type="ECO:0000255" key="3"/>
<evidence type="ECO:0000269" key="4">
    <source>
    </source>
</evidence>
<evidence type="ECO:0000305" key="5"/>
<keyword id="KW-0326">Glycosidase</keyword>
<keyword id="KW-0378">Hydrolase</keyword>
<keyword id="KW-1185">Reference proteome</keyword>
<keyword id="KW-0964">Secreted</keyword>
<keyword id="KW-0732">Signal</keyword>
<dbReference type="EC" id="3.2.1.78"/>
<dbReference type="EMBL" id="AF184238">
    <property type="protein sequence ID" value="AAG00315.2"/>
    <property type="molecule type" value="mRNA"/>
</dbReference>
<dbReference type="RefSeq" id="NP_001234473.1">
    <property type="nucleotide sequence ID" value="NM_001247544.2"/>
</dbReference>
<dbReference type="SMR" id="Q9FZ03"/>
<dbReference type="STRING" id="4081.Q9FZ03"/>
<dbReference type="CAZy" id="GH5">
    <property type="family name" value="Glycoside Hydrolase Family 5"/>
</dbReference>
<dbReference type="PaxDb" id="4081-Solyc06g064520.2.1"/>
<dbReference type="GeneID" id="544170"/>
<dbReference type="KEGG" id="sly:544170"/>
<dbReference type="eggNOG" id="ENOG502QTAQ">
    <property type="taxonomic scope" value="Eukaryota"/>
</dbReference>
<dbReference type="HOGENOM" id="CLU_031603_0_0_1"/>
<dbReference type="InParanoid" id="Q9FZ03"/>
<dbReference type="OrthoDB" id="406631at2759"/>
<dbReference type="PhylomeDB" id="Q9FZ03"/>
<dbReference type="Proteomes" id="UP000004994">
    <property type="component" value="Unplaced"/>
</dbReference>
<dbReference type="ExpressionAtlas" id="Q9FZ03">
    <property type="expression patterns" value="baseline"/>
</dbReference>
<dbReference type="GO" id="GO:0005576">
    <property type="term" value="C:extracellular region"/>
    <property type="evidence" value="ECO:0007669"/>
    <property type="project" value="UniProtKB-SubCell"/>
</dbReference>
<dbReference type="GO" id="GO:0016985">
    <property type="term" value="F:mannan endo-1,4-beta-mannosidase activity"/>
    <property type="evidence" value="ECO:0000318"/>
    <property type="project" value="GO_Central"/>
</dbReference>
<dbReference type="GO" id="GO:0000272">
    <property type="term" value="P:polysaccharide catabolic process"/>
    <property type="evidence" value="ECO:0007669"/>
    <property type="project" value="InterPro"/>
</dbReference>
<dbReference type="FunFam" id="3.20.20.80:FF:000012">
    <property type="entry name" value="Mannan endo-1,4-beta-mannosidase 6"/>
    <property type="match status" value="1"/>
</dbReference>
<dbReference type="Gene3D" id="3.20.20.80">
    <property type="entry name" value="Glycosidases"/>
    <property type="match status" value="1"/>
</dbReference>
<dbReference type="InterPro" id="IPR001547">
    <property type="entry name" value="Glyco_hydro_5"/>
</dbReference>
<dbReference type="InterPro" id="IPR017853">
    <property type="entry name" value="Glycoside_hydrolase_SF"/>
</dbReference>
<dbReference type="InterPro" id="IPR045053">
    <property type="entry name" value="MAN-like"/>
</dbReference>
<dbReference type="PANTHER" id="PTHR31451">
    <property type="match status" value="1"/>
</dbReference>
<dbReference type="PANTHER" id="PTHR31451:SF62">
    <property type="entry name" value="MANNAN ENDO-1,4-BETA-MANNOSIDASE 2"/>
    <property type="match status" value="1"/>
</dbReference>
<dbReference type="Pfam" id="PF00150">
    <property type="entry name" value="Cellulase"/>
    <property type="match status" value="1"/>
</dbReference>
<dbReference type="SUPFAM" id="SSF51445">
    <property type="entry name" value="(Trans)glycosidases"/>
    <property type="match status" value="1"/>
</dbReference>